<accession>A1TRE0</accession>
<dbReference type="EC" id="3.5.2.7" evidence="1"/>
<dbReference type="EMBL" id="CP000512">
    <property type="protein sequence ID" value="ABM33528.1"/>
    <property type="molecule type" value="Genomic_DNA"/>
</dbReference>
<dbReference type="RefSeq" id="WP_011796039.1">
    <property type="nucleotide sequence ID" value="NC_008752.1"/>
</dbReference>
<dbReference type="SMR" id="A1TRE0"/>
<dbReference type="STRING" id="397945.Aave_2961"/>
<dbReference type="KEGG" id="aav:Aave_2961"/>
<dbReference type="eggNOG" id="COG1228">
    <property type="taxonomic scope" value="Bacteria"/>
</dbReference>
<dbReference type="HOGENOM" id="CLU_041647_0_1_4"/>
<dbReference type="OrthoDB" id="9776455at2"/>
<dbReference type="UniPathway" id="UPA00379">
    <property type="reaction ID" value="UER00551"/>
</dbReference>
<dbReference type="Proteomes" id="UP000002596">
    <property type="component" value="Chromosome"/>
</dbReference>
<dbReference type="GO" id="GO:0005737">
    <property type="term" value="C:cytoplasm"/>
    <property type="evidence" value="ECO:0007669"/>
    <property type="project" value="UniProtKB-SubCell"/>
</dbReference>
<dbReference type="GO" id="GO:0050480">
    <property type="term" value="F:imidazolonepropionase activity"/>
    <property type="evidence" value="ECO:0007669"/>
    <property type="project" value="UniProtKB-UniRule"/>
</dbReference>
<dbReference type="GO" id="GO:0005506">
    <property type="term" value="F:iron ion binding"/>
    <property type="evidence" value="ECO:0007669"/>
    <property type="project" value="UniProtKB-UniRule"/>
</dbReference>
<dbReference type="GO" id="GO:0008270">
    <property type="term" value="F:zinc ion binding"/>
    <property type="evidence" value="ECO:0007669"/>
    <property type="project" value="UniProtKB-UniRule"/>
</dbReference>
<dbReference type="GO" id="GO:0019556">
    <property type="term" value="P:L-histidine catabolic process to glutamate and formamide"/>
    <property type="evidence" value="ECO:0007669"/>
    <property type="project" value="UniProtKB-UniPathway"/>
</dbReference>
<dbReference type="GO" id="GO:0019557">
    <property type="term" value="P:L-histidine catabolic process to glutamate and formate"/>
    <property type="evidence" value="ECO:0007669"/>
    <property type="project" value="UniProtKB-UniPathway"/>
</dbReference>
<dbReference type="CDD" id="cd01296">
    <property type="entry name" value="Imidazolone-5PH"/>
    <property type="match status" value="1"/>
</dbReference>
<dbReference type="FunFam" id="3.20.20.140:FF:000007">
    <property type="entry name" value="Imidazolonepropionase"/>
    <property type="match status" value="1"/>
</dbReference>
<dbReference type="Gene3D" id="3.20.20.140">
    <property type="entry name" value="Metal-dependent hydrolases"/>
    <property type="match status" value="1"/>
</dbReference>
<dbReference type="Gene3D" id="2.30.40.10">
    <property type="entry name" value="Urease, subunit C, domain 1"/>
    <property type="match status" value="1"/>
</dbReference>
<dbReference type="HAMAP" id="MF_00372">
    <property type="entry name" value="HutI"/>
    <property type="match status" value="1"/>
</dbReference>
<dbReference type="InterPro" id="IPR006680">
    <property type="entry name" value="Amidohydro-rel"/>
</dbReference>
<dbReference type="InterPro" id="IPR005920">
    <property type="entry name" value="HutI"/>
</dbReference>
<dbReference type="InterPro" id="IPR011059">
    <property type="entry name" value="Metal-dep_hydrolase_composite"/>
</dbReference>
<dbReference type="InterPro" id="IPR032466">
    <property type="entry name" value="Metal_Hydrolase"/>
</dbReference>
<dbReference type="NCBIfam" id="TIGR01224">
    <property type="entry name" value="hutI"/>
    <property type="match status" value="1"/>
</dbReference>
<dbReference type="PANTHER" id="PTHR42752">
    <property type="entry name" value="IMIDAZOLONEPROPIONASE"/>
    <property type="match status" value="1"/>
</dbReference>
<dbReference type="PANTHER" id="PTHR42752:SF1">
    <property type="entry name" value="IMIDAZOLONEPROPIONASE-RELATED"/>
    <property type="match status" value="1"/>
</dbReference>
<dbReference type="Pfam" id="PF01979">
    <property type="entry name" value="Amidohydro_1"/>
    <property type="match status" value="1"/>
</dbReference>
<dbReference type="SUPFAM" id="SSF51338">
    <property type="entry name" value="Composite domain of metallo-dependent hydrolases"/>
    <property type="match status" value="2"/>
</dbReference>
<dbReference type="SUPFAM" id="SSF51556">
    <property type="entry name" value="Metallo-dependent hydrolases"/>
    <property type="match status" value="1"/>
</dbReference>
<protein>
    <recommendedName>
        <fullName evidence="1">Imidazolonepropionase</fullName>
        <ecNumber evidence="1">3.5.2.7</ecNumber>
    </recommendedName>
    <alternativeName>
        <fullName evidence="1">Imidazolone-5-propionate hydrolase</fullName>
    </alternativeName>
</protein>
<proteinExistence type="inferred from homology"/>
<comment type="function">
    <text evidence="1">Catalyzes the hydrolytic cleavage of the carbon-nitrogen bond in imidazolone-5-propanoate to yield N-formimidoyl-L-glutamate. It is the third step in the universal histidine degradation pathway.</text>
</comment>
<comment type="catalytic activity">
    <reaction evidence="1">
        <text>4-imidazolone-5-propanoate + H2O = N-formimidoyl-L-glutamate</text>
        <dbReference type="Rhea" id="RHEA:23660"/>
        <dbReference type="ChEBI" id="CHEBI:15377"/>
        <dbReference type="ChEBI" id="CHEBI:58928"/>
        <dbReference type="ChEBI" id="CHEBI:77893"/>
        <dbReference type="EC" id="3.5.2.7"/>
    </reaction>
</comment>
<comment type="cofactor">
    <cofactor evidence="1">
        <name>Zn(2+)</name>
        <dbReference type="ChEBI" id="CHEBI:29105"/>
    </cofactor>
    <cofactor evidence="1">
        <name>Fe(3+)</name>
        <dbReference type="ChEBI" id="CHEBI:29034"/>
    </cofactor>
    <text evidence="1">Binds 1 zinc or iron ion per subunit.</text>
</comment>
<comment type="pathway">
    <text evidence="1">Amino-acid degradation; L-histidine degradation into L-glutamate; N-formimidoyl-L-glutamate from L-histidine: step 3/3.</text>
</comment>
<comment type="subcellular location">
    <subcellularLocation>
        <location evidence="1">Cytoplasm</location>
    </subcellularLocation>
</comment>
<comment type="similarity">
    <text evidence="1">Belongs to the metallo-dependent hydrolases superfamily. HutI family.</text>
</comment>
<organism>
    <name type="scientific">Paracidovorax citrulli (strain AAC00-1)</name>
    <name type="common">Acidovorax citrulli</name>
    <dbReference type="NCBI Taxonomy" id="397945"/>
    <lineage>
        <taxon>Bacteria</taxon>
        <taxon>Pseudomonadati</taxon>
        <taxon>Pseudomonadota</taxon>
        <taxon>Betaproteobacteria</taxon>
        <taxon>Burkholderiales</taxon>
        <taxon>Comamonadaceae</taxon>
        <taxon>Paracidovorax</taxon>
    </lineage>
</organism>
<feature type="chain" id="PRO_0000306420" description="Imidazolonepropionase">
    <location>
        <begin position="1"/>
        <end position="416"/>
    </location>
</feature>
<feature type="binding site" evidence="1">
    <location>
        <position position="81"/>
    </location>
    <ligand>
        <name>Fe(3+)</name>
        <dbReference type="ChEBI" id="CHEBI:29034"/>
    </ligand>
</feature>
<feature type="binding site" evidence="1">
    <location>
        <position position="81"/>
    </location>
    <ligand>
        <name>Zn(2+)</name>
        <dbReference type="ChEBI" id="CHEBI:29105"/>
    </ligand>
</feature>
<feature type="binding site" evidence="1">
    <location>
        <position position="83"/>
    </location>
    <ligand>
        <name>Fe(3+)</name>
        <dbReference type="ChEBI" id="CHEBI:29034"/>
    </ligand>
</feature>
<feature type="binding site" evidence="1">
    <location>
        <position position="83"/>
    </location>
    <ligand>
        <name>Zn(2+)</name>
        <dbReference type="ChEBI" id="CHEBI:29105"/>
    </ligand>
</feature>
<feature type="binding site" evidence="1">
    <location>
        <position position="90"/>
    </location>
    <ligand>
        <name>4-imidazolone-5-propanoate</name>
        <dbReference type="ChEBI" id="CHEBI:77893"/>
    </ligand>
</feature>
<feature type="binding site" evidence="1">
    <location>
        <position position="153"/>
    </location>
    <ligand>
        <name>4-imidazolone-5-propanoate</name>
        <dbReference type="ChEBI" id="CHEBI:77893"/>
    </ligand>
</feature>
<feature type="binding site" evidence="1">
    <location>
        <position position="153"/>
    </location>
    <ligand>
        <name>N-formimidoyl-L-glutamate</name>
        <dbReference type="ChEBI" id="CHEBI:58928"/>
    </ligand>
</feature>
<feature type="binding site" evidence="1">
    <location>
        <position position="186"/>
    </location>
    <ligand>
        <name>4-imidazolone-5-propanoate</name>
        <dbReference type="ChEBI" id="CHEBI:77893"/>
    </ligand>
</feature>
<feature type="binding site" evidence="1">
    <location>
        <position position="251"/>
    </location>
    <ligand>
        <name>Fe(3+)</name>
        <dbReference type="ChEBI" id="CHEBI:29034"/>
    </ligand>
</feature>
<feature type="binding site" evidence="1">
    <location>
        <position position="251"/>
    </location>
    <ligand>
        <name>Zn(2+)</name>
        <dbReference type="ChEBI" id="CHEBI:29105"/>
    </ligand>
</feature>
<feature type="binding site" evidence="1">
    <location>
        <position position="254"/>
    </location>
    <ligand>
        <name>4-imidazolone-5-propanoate</name>
        <dbReference type="ChEBI" id="CHEBI:77893"/>
    </ligand>
</feature>
<feature type="binding site" evidence="1">
    <location>
        <position position="326"/>
    </location>
    <ligand>
        <name>Fe(3+)</name>
        <dbReference type="ChEBI" id="CHEBI:29034"/>
    </ligand>
</feature>
<feature type="binding site" evidence="1">
    <location>
        <position position="326"/>
    </location>
    <ligand>
        <name>Zn(2+)</name>
        <dbReference type="ChEBI" id="CHEBI:29105"/>
    </ligand>
</feature>
<feature type="binding site" evidence="1">
    <location>
        <position position="328"/>
    </location>
    <ligand>
        <name>N-formimidoyl-L-glutamate</name>
        <dbReference type="ChEBI" id="CHEBI:58928"/>
    </ligand>
</feature>
<feature type="binding site" evidence="1">
    <location>
        <position position="330"/>
    </location>
    <ligand>
        <name>N-formimidoyl-L-glutamate</name>
        <dbReference type="ChEBI" id="CHEBI:58928"/>
    </ligand>
</feature>
<feature type="binding site" evidence="1">
    <location>
        <position position="331"/>
    </location>
    <ligand>
        <name>4-imidazolone-5-propanoate</name>
        <dbReference type="ChEBI" id="CHEBI:77893"/>
    </ligand>
</feature>
<reference key="1">
    <citation type="submission" date="2006-12" db="EMBL/GenBank/DDBJ databases">
        <title>Complete sequence of Acidovorax avenae subsp. citrulli AAC00-1.</title>
        <authorList>
            <person name="Copeland A."/>
            <person name="Lucas S."/>
            <person name="Lapidus A."/>
            <person name="Barry K."/>
            <person name="Detter J.C."/>
            <person name="Glavina del Rio T."/>
            <person name="Dalin E."/>
            <person name="Tice H."/>
            <person name="Pitluck S."/>
            <person name="Kiss H."/>
            <person name="Brettin T."/>
            <person name="Bruce D."/>
            <person name="Han C."/>
            <person name="Tapia R."/>
            <person name="Gilna P."/>
            <person name="Schmutz J."/>
            <person name="Larimer F."/>
            <person name="Land M."/>
            <person name="Hauser L."/>
            <person name="Kyrpides N."/>
            <person name="Kim E."/>
            <person name="Stahl D."/>
            <person name="Richardson P."/>
        </authorList>
    </citation>
    <scope>NUCLEOTIDE SEQUENCE [LARGE SCALE GENOMIC DNA]</scope>
    <source>
        <strain>AAC00-1</strain>
    </source>
</reference>
<gene>
    <name evidence="1" type="primary">hutI</name>
    <name type="ordered locus">Aave_2961</name>
</gene>
<keyword id="KW-0963">Cytoplasm</keyword>
<keyword id="KW-0369">Histidine metabolism</keyword>
<keyword id="KW-0378">Hydrolase</keyword>
<keyword id="KW-0408">Iron</keyword>
<keyword id="KW-0479">Metal-binding</keyword>
<keyword id="KW-0862">Zinc</keyword>
<sequence>MQPTPFSSLSSADGCWTGLRLAQGLFIPDVAVPDDALSCVVVQGGTVRWVGPVAAVPPAFAALPRHAGGGALATPGLVDCHTHLVYGGHRANEFAMRLAGASYEEVARAGGGIVSSVKATRAASEDELFAQALPRLQALLDEGVCAIEIKSGYGLALEHERKQLRAARRLGEACGVTVRTTFLGAHALPPEYAGRSQDYIDLVCREMLPALAEEGLVDAVDVFCERIAFSLAETEQVFQAAQALGLPVKLHAEQLSDMDGARLAARYGALSCDHIEHLSAEGIAAMKAAGTVAVLLPGAYYTLRDTHLPPIQALREAGVPMAVSTDHNPGTSPALSLRLMANMACTLFRLTVPEALAGITTHAARALGLQDTHGLIAAGRPADFVLWPFAEAAELAYWFGHQPPQAIVRQGRVVQR</sequence>
<evidence type="ECO:0000255" key="1">
    <source>
        <dbReference type="HAMAP-Rule" id="MF_00372"/>
    </source>
</evidence>
<name>HUTI_PARC0</name>